<keyword id="KW-0274">FAD</keyword>
<keyword id="KW-0285">Flavoprotein</keyword>
<keyword id="KW-0472">Membrane</keyword>
<keyword id="KW-0496">Mitochondrion</keyword>
<keyword id="KW-0503">Monooxygenase</keyword>
<keyword id="KW-0521">NADP</keyword>
<keyword id="KW-0560">Oxidoreductase</keyword>
<keyword id="KW-0662">Pyridine nucleotide biosynthesis</keyword>
<keyword id="KW-1185">Reference proteome</keyword>
<keyword id="KW-0812">Transmembrane</keyword>
<keyword id="KW-1133">Transmembrane helix</keyword>
<comment type="function">
    <text evidence="1">Catalyzes the hydroxylation of L-kynurenine (L-Kyn) to form 3-hydroxy-L-kynurenine (L-3OHKyn). Required for synthesis of quinolinic acid.</text>
</comment>
<comment type="catalytic activity">
    <reaction evidence="1">
        <text>L-kynurenine + NADPH + O2 + H(+) = 3-hydroxy-L-kynurenine + NADP(+) + H2O</text>
        <dbReference type="Rhea" id="RHEA:20545"/>
        <dbReference type="ChEBI" id="CHEBI:15377"/>
        <dbReference type="ChEBI" id="CHEBI:15378"/>
        <dbReference type="ChEBI" id="CHEBI:15379"/>
        <dbReference type="ChEBI" id="CHEBI:57783"/>
        <dbReference type="ChEBI" id="CHEBI:57959"/>
        <dbReference type="ChEBI" id="CHEBI:58125"/>
        <dbReference type="ChEBI" id="CHEBI:58349"/>
        <dbReference type="EC" id="1.14.13.9"/>
    </reaction>
</comment>
<comment type="cofactor">
    <cofactor evidence="1">
        <name>FAD</name>
        <dbReference type="ChEBI" id="CHEBI:57692"/>
    </cofactor>
</comment>
<comment type="pathway">
    <text evidence="1">Cofactor biosynthesis; NAD(+) biosynthesis; quinolinate from L-kynurenine: step 1/3.</text>
</comment>
<comment type="subcellular location">
    <subcellularLocation>
        <location evidence="1">Mitochondrion</location>
    </subcellularLocation>
    <subcellularLocation>
        <location evidence="1">Membrane</location>
        <topology evidence="1">Multi-pass membrane protein</topology>
    </subcellularLocation>
</comment>
<comment type="similarity">
    <text evidence="1">Belongs to the aromatic-ring hydroxylase family. KMO subfamily.</text>
</comment>
<proteinExistence type="inferred from homology"/>
<dbReference type="EC" id="1.14.13.9" evidence="1"/>
<dbReference type="EMBL" id="HE601533">
    <property type="protein sequence ID" value="CAP39652.1"/>
    <property type="molecule type" value="Genomic_DNA"/>
</dbReference>
<dbReference type="RefSeq" id="XP_002636657.1">
    <property type="nucleotide sequence ID" value="XM_002636611.1"/>
</dbReference>
<dbReference type="SMR" id="A8Y432"/>
<dbReference type="FunCoup" id="A8Y432">
    <property type="interactions" value="341"/>
</dbReference>
<dbReference type="STRING" id="6238.A8Y432"/>
<dbReference type="EnsemblMetazoa" id="CBG23368.1">
    <property type="protein sequence ID" value="CBG23368.1"/>
    <property type="gene ID" value="WBGene00041735"/>
</dbReference>
<dbReference type="GeneID" id="8578652"/>
<dbReference type="KEGG" id="cbr:CBG_23368"/>
<dbReference type="CTD" id="8578652"/>
<dbReference type="WormBase" id="CBG23368">
    <property type="protein sequence ID" value="CBP05530"/>
    <property type="gene ID" value="WBGene00041735"/>
    <property type="gene designation" value="Cbr-kmo-1"/>
</dbReference>
<dbReference type="eggNOG" id="KOG2614">
    <property type="taxonomic scope" value="Eukaryota"/>
</dbReference>
<dbReference type="HOGENOM" id="CLU_023210_0_1_1"/>
<dbReference type="InParanoid" id="A8Y432"/>
<dbReference type="OMA" id="REFMFIA"/>
<dbReference type="UniPathway" id="UPA00253">
    <property type="reaction ID" value="UER00328"/>
</dbReference>
<dbReference type="Proteomes" id="UP000008549">
    <property type="component" value="Unassembled WGS sequence"/>
</dbReference>
<dbReference type="GO" id="GO:0005741">
    <property type="term" value="C:mitochondrial outer membrane"/>
    <property type="evidence" value="ECO:0000250"/>
    <property type="project" value="UniProtKB"/>
</dbReference>
<dbReference type="GO" id="GO:0071949">
    <property type="term" value="F:FAD binding"/>
    <property type="evidence" value="ECO:0007669"/>
    <property type="project" value="InterPro"/>
</dbReference>
<dbReference type="GO" id="GO:0004502">
    <property type="term" value="F:kynurenine 3-monooxygenase activity"/>
    <property type="evidence" value="ECO:0000250"/>
    <property type="project" value="UniProtKB"/>
</dbReference>
<dbReference type="GO" id="GO:0034354">
    <property type="term" value="P:'de novo' NAD biosynthetic process from L-tryptophan"/>
    <property type="evidence" value="ECO:0007669"/>
    <property type="project" value="UniProtKB-UniRule"/>
</dbReference>
<dbReference type="GO" id="GO:0043420">
    <property type="term" value="P:anthranilate metabolic process"/>
    <property type="evidence" value="ECO:0007669"/>
    <property type="project" value="UniProtKB-UniRule"/>
</dbReference>
<dbReference type="GO" id="GO:0070189">
    <property type="term" value="P:kynurenine metabolic process"/>
    <property type="evidence" value="ECO:0000318"/>
    <property type="project" value="GO_Central"/>
</dbReference>
<dbReference type="GO" id="GO:0006569">
    <property type="term" value="P:L-tryptophan catabolic process"/>
    <property type="evidence" value="ECO:0007669"/>
    <property type="project" value="UniProtKB-UniRule"/>
</dbReference>
<dbReference type="GO" id="GO:0019674">
    <property type="term" value="P:NAD metabolic process"/>
    <property type="evidence" value="ECO:0000250"/>
    <property type="project" value="UniProtKB"/>
</dbReference>
<dbReference type="GO" id="GO:0019805">
    <property type="term" value="P:quinolinate biosynthetic process"/>
    <property type="evidence" value="ECO:0007669"/>
    <property type="project" value="UniProtKB-UniRule"/>
</dbReference>
<dbReference type="FunFam" id="3.50.50.60:FF:000129">
    <property type="entry name" value="Kynurenine 3-monooxygenase"/>
    <property type="match status" value="1"/>
</dbReference>
<dbReference type="Gene3D" id="3.50.50.60">
    <property type="entry name" value="FAD/NAD(P)-binding domain"/>
    <property type="match status" value="1"/>
</dbReference>
<dbReference type="HAMAP" id="MF_01971">
    <property type="entry name" value="Kynurenine_monooxygenase"/>
    <property type="match status" value="1"/>
</dbReference>
<dbReference type="InterPro" id="IPR002938">
    <property type="entry name" value="FAD-bd"/>
</dbReference>
<dbReference type="InterPro" id="IPR036188">
    <property type="entry name" value="FAD/NAD-bd_sf"/>
</dbReference>
<dbReference type="InterPro" id="IPR027545">
    <property type="entry name" value="Kynurenine_monooxygenase"/>
</dbReference>
<dbReference type="PANTHER" id="PTHR46028">
    <property type="entry name" value="KYNURENINE 3-MONOOXYGENASE"/>
    <property type="match status" value="1"/>
</dbReference>
<dbReference type="PANTHER" id="PTHR46028:SF2">
    <property type="entry name" value="KYNURENINE 3-MONOOXYGENASE"/>
    <property type="match status" value="1"/>
</dbReference>
<dbReference type="Pfam" id="PF01494">
    <property type="entry name" value="FAD_binding_3"/>
    <property type="match status" value="1"/>
</dbReference>
<dbReference type="PRINTS" id="PR00420">
    <property type="entry name" value="RNGMNOXGNASE"/>
</dbReference>
<dbReference type="SUPFAM" id="SSF51905">
    <property type="entry name" value="FAD/NAD(P)-binding domain"/>
    <property type="match status" value="1"/>
</dbReference>
<reference key="1">
    <citation type="journal article" date="2003" name="PLoS Biol.">
        <title>The genome sequence of Caenorhabditis briggsae: a platform for comparative genomics.</title>
        <authorList>
            <person name="Stein L.D."/>
            <person name="Bao Z."/>
            <person name="Blasiar D."/>
            <person name="Blumenthal T."/>
            <person name="Brent M.R."/>
            <person name="Chen N."/>
            <person name="Chinwalla A."/>
            <person name="Clarke L."/>
            <person name="Clee C."/>
            <person name="Coghlan A."/>
            <person name="Coulson A."/>
            <person name="D'Eustachio P."/>
            <person name="Fitch D.H.A."/>
            <person name="Fulton L.A."/>
            <person name="Fulton R.E."/>
            <person name="Griffiths-Jones S."/>
            <person name="Harris T.W."/>
            <person name="Hillier L.W."/>
            <person name="Kamath R."/>
            <person name="Kuwabara P.E."/>
            <person name="Mardis E.R."/>
            <person name="Marra M.A."/>
            <person name="Miner T.L."/>
            <person name="Minx P."/>
            <person name="Mullikin J.C."/>
            <person name="Plumb R.W."/>
            <person name="Rogers J."/>
            <person name="Schein J.E."/>
            <person name="Sohrmann M."/>
            <person name="Spieth J."/>
            <person name="Stajich J.E."/>
            <person name="Wei C."/>
            <person name="Willey D."/>
            <person name="Wilson R.K."/>
            <person name="Durbin R.M."/>
            <person name="Waterston R.H."/>
        </authorList>
    </citation>
    <scope>NUCLEOTIDE SEQUENCE [LARGE SCALE GENOMIC DNA]</scope>
    <source>
        <strain>AF16</strain>
    </source>
</reference>
<feature type="chain" id="PRO_0000361910" description="Kynurenine 3-monooxygenase">
    <location>
        <begin position="1"/>
        <end position="461"/>
    </location>
</feature>
<feature type="transmembrane region" description="Helical" evidence="1">
    <location>
        <begin position="395"/>
        <end position="415"/>
    </location>
</feature>
<feature type="transmembrane region" description="Helical" evidence="1">
    <location>
        <begin position="432"/>
        <end position="452"/>
    </location>
</feature>
<accession>A8Y432</accession>
<evidence type="ECO:0000255" key="1">
    <source>
        <dbReference type="HAMAP-Rule" id="MF_03018"/>
    </source>
</evidence>
<organism>
    <name type="scientific">Caenorhabditis briggsae</name>
    <dbReference type="NCBI Taxonomy" id="6238"/>
    <lineage>
        <taxon>Eukaryota</taxon>
        <taxon>Metazoa</taxon>
        <taxon>Ecdysozoa</taxon>
        <taxon>Nematoda</taxon>
        <taxon>Chromadorea</taxon>
        <taxon>Rhabditida</taxon>
        <taxon>Rhabditina</taxon>
        <taxon>Rhabditomorpha</taxon>
        <taxon>Rhabditoidea</taxon>
        <taxon>Rhabditidae</taxon>
        <taxon>Peloderinae</taxon>
        <taxon>Caenorhabditis</taxon>
    </lineage>
</organism>
<name>KMO_CAEBR</name>
<sequence length="461" mass="52555">MPSVAIAGAGLVGALNACFFAQKGWDVSVYEFRKDIRTMKHVQGRSINLALSQRGKSALEAVGLKEYIVNQGVPLYARLVHNKDGKTYSRQPYGKPGEHIVSINRRHLNEVMITQAEKSPNVKFFFEHKVKSVDYDKKQLVVQCTSQPSRIPTFGTKSPPAEHEEFHVEADLIIACDGAYSAVRRSLMTIPRFDFSQEYIEHGYVELNIMANNNEFAFEENVFHLWPRGHFTLIALANRDKTFTVTIFAPFTEFEKHMSTTEEVLSFFEENFPDAYLLLGKEHIADTFNRVKPQSLVSIKCSPHSFFNNLVLMGDAAHAMVPFYGQGMNCGFEDCLVFSETLEEQNNDIASAVQVYSERRVNDAHTINDLAMYNYEELKDLVNKNSYKLRKKFDGFMNAIFPKSWIPLYSMVTFTRIPYSEVVDRRRKQDRILSNLWKTTSTLALIGAAIGIYSNRGRLGL</sequence>
<gene>
    <name evidence="1" type="primary">kmo-1</name>
    <name type="ORF">CBG23368</name>
</gene>
<protein>
    <recommendedName>
        <fullName evidence="1">Kynurenine 3-monooxygenase</fullName>
        <ecNumber evidence="1">1.14.13.9</ecNumber>
    </recommendedName>
    <alternativeName>
        <fullName evidence="1">Kynurenine 3-hydroxylase</fullName>
    </alternativeName>
</protein>